<reference key="1">
    <citation type="journal article" date="1992" name="Virology">
        <title>Channel catfish virus: a new type of herpesvirus.</title>
        <authorList>
            <person name="Davison A.J."/>
        </authorList>
    </citation>
    <scope>NUCLEOTIDE SEQUENCE [LARGE SCALE GENOMIC DNA]</scope>
</reference>
<keyword id="KW-1185">Reference proteome</keyword>
<gene>
    <name type="primary">ORF33</name>
</gene>
<proteinExistence type="predicted"/>
<feature type="chain" id="PRO_0000222115" description="Uncharacterized protein ORF33">
    <location>
        <begin position="1"/>
        <end position="290"/>
    </location>
</feature>
<accession>Q00118</accession>
<protein>
    <recommendedName>
        <fullName>Uncharacterized protein ORF33</fullName>
    </recommendedName>
</protein>
<name>VG33_ICHVA</name>
<organism>
    <name type="scientific">Ictalurid herpesvirus 1 (strain Auburn)</name>
    <name type="common">IcHV-1</name>
    <name type="synonym">Channel catfish herpesvirus</name>
    <dbReference type="NCBI Taxonomy" id="766178"/>
    <lineage>
        <taxon>Viruses</taxon>
        <taxon>Duplodnaviria</taxon>
        <taxon>Heunggongvirae</taxon>
        <taxon>Peploviricota</taxon>
        <taxon>Herviviricetes</taxon>
        <taxon>Herpesvirales</taxon>
        <taxon>Alloherpesviridae</taxon>
        <taxon>Ictavirus</taxon>
        <taxon>Ictavirus ictaluridallo1</taxon>
        <taxon>Ictalurid herpesvirus 1</taxon>
    </lineage>
</organism>
<organismHost>
    <name type="scientific">Ictaluridae</name>
    <name type="common">bullhead catfishes</name>
    <dbReference type="NCBI Taxonomy" id="7996"/>
</organismHost>
<dbReference type="EMBL" id="M75136">
    <property type="protein sequence ID" value="AAA88136.1"/>
    <property type="molecule type" value="Genomic_DNA"/>
</dbReference>
<dbReference type="PIR" id="G36789">
    <property type="entry name" value="G36789"/>
</dbReference>
<dbReference type="RefSeq" id="NP_041124.1">
    <property type="nucleotide sequence ID" value="NC_001493.2"/>
</dbReference>
<dbReference type="SMR" id="Q00118"/>
<dbReference type="GeneID" id="1488367"/>
<dbReference type="KEGG" id="vg:1488367"/>
<dbReference type="Proteomes" id="UP000007643">
    <property type="component" value="Segment"/>
</dbReference>
<sequence>MEPISYVTITDYTAFANWLLSTTTVTDVRFWDRIGGFFNLTASNGRLLDLSRRAYVHWNLRVHGHFSELCTVGGGVERTPLFRALTLRAWNSEPERVLRTIRELRTEKLHERGDYWGRNLEYMCTNILAETPEPIFRTLCHTRIIPELKRLVTTWKVYITAMYAGRHDDLVLQVTYFIRRSIEVDRPLLEFIGELKHSCSLPISRKMTTDKTFHVSGFITTTCTKELDRDDTARLVHRNGTGFETVVDRIVWGATMWWYRRTYRAVESYDEFWYKYCGWMDTPTGELPDE</sequence>